<proteinExistence type="inferred from homology"/>
<dbReference type="EMBL" id="KU946987">
    <property type="protein sequence ID" value="AMY15055.1"/>
    <property type="molecule type" value="Genomic_DNA"/>
</dbReference>
<dbReference type="SMR" id="A0A3G1DJE2"/>
<dbReference type="GlyCosmos" id="A0A3G1DJE2">
    <property type="glycosylation" value="2 sites, No reported glycans"/>
</dbReference>
<dbReference type="GO" id="GO:0005886">
    <property type="term" value="C:plasma membrane"/>
    <property type="evidence" value="ECO:0007669"/>
    <property type="project" value="TreeGrafter"/>
</dbReference>
<dbReference type="GO" id="GO:0022857">
    <property type="term" value="F:transmembrane transporter activity"/>
    <property type="evidence" value="ECO:0007669"/>
    <property type="project" value="InterPro"/>
</dbReference>
<dbReference type="FunFam" id="1.20.1250.20:FF:000786">
    <property type="entry name" value="MFS multidrug transporter, putative"/>
    <property type="match status" value="1"/>
</dbReference>
<dbReference type="FunFam" id="1.20.1720.10:FF:000018">
    <property type="entry name" value="Putative MFS multidrug transporter"/>
    <property type="match status" value="1"/>
</dbReference>
<dbReference type="Gene3D" id="1.20.1250.20">
    <property type="entry name" value="MFS general substrate transporter like domains"/>
    <property type="match status" value="1"/>
</dbReference>
<dbReference type="Gene3D" id="1.20.1720.10">
    <property type="entry name" value="Multidrug resistance protein D"/>
    <property type="match status" value="1"/>
</dbReference>
<dbReference type="InterPro" id="IPR011701">
    <property type="entry name" value="MFS"/>
</dbReference>
<dbReference type="InterPro" id="IPR020846">
    <property type="entry name" value="MFS_dom"/>
</dbReference>
<dbReference type="InterPro" id="IPR036259">
    <property type="entry name" value="MFS_trans_sf"/>
</dbReference>
<dbReference type="PANTHER" id="PTHR23501">
    <property type="entry name" value="MAJOR FACILITATOR SUPERFAMILY"/>
    <property type="match status" value="1"/>
</dbReference>
<dbReference type="PANTHER" id="PTHR23501:SF59">
    <property type="entry name" value="MAJOR FACILITATOR SUPERFAMILY (MFS) PROFILE DOMAIN-CONTAINING PROTEIN-RELATED"/>
    <property type="match status" value="1"/>
</dbReference>
<dbReference type="Pfam" id="PF07690">
    <property type="entry name" value="MFS_1"/>
    <property type="match status" value="1"/>
</dbReference>
<dbReference type="PRINTS" id="PR01036">
    <property type="entry name" value="TCRTETB"/>
</dbReference>
<dbReference type="SUPFAM" id="SSF103473">
    <property type="entry name" value="MFS general substrate transporter"/>
    <property type="match status" value="1"/>
</dbReference>
<dbReference type="PROSITE" id="PS50850">
    <property type="entry name" value="MFS"/>
    <property type="match status" value="1"/>
</dbReference>
<comment type="function">
    <text evidence="3">MFS transporter; part of the gene cluster that mediates the biosynthesis of squalestatin S1 (SQS1, also known as zaragozic acid A), a lead compound for the treatment of hyper-cholesterolemia by targeting squalene synthase (SS).</text>
</comment>
<comment type="subcellular location">
    <subcellularLocation>
        <location evidence="1">Membrane</location>
        <topology evidence="1">Multi-pass membrane protein</topology>
    </subcellularLocation>
</comment>
<comment type="similarity">
    <text evidence="5">Belongs to the major facilitator superfamily.</text>
</comment>
<reference key="1">
    <citation type="journal article" date="2016" name="Chem. Commun. (Camb.)">
        <title>Identification of genes encoding squalestatin S1 biosynthesis and in vitro production of new squalestatin analogues.</title>
        <authorList>
            <person name="Bonsch B."/>
            <person name="Belt V."/>
            <person name="Bartel C."/>
            <person name="Duensing N."/>
            <person name="Koziol M."/>
            <person name="Lazarus C.M."/>
            <person name="Bailey A.M."/>
            <person name="Simpson T.J."/>
            <person name="Cox R.J."/>
        </authorList>
    </citation>
    <scope>NUCLEOTIDE SEQUENCE [GENOMIC DNA]</scope>
    <scope>FUNCTION</scope>
</reference>
<protein>
    <recommendedName>
        <fullName evidence="4">MFS transporter L2</fullName>
    </recommendedName>
    <alternativeName>
        <fullName evidence="4">Squalestatin S1 biosynthesis cluster protein L2</fullName>
    </alternativeName>
</protein>
<organism>
    <name type="scientific">Phoma sp. (strain ATCC 20986 / MF5453)</name>
    <dbReference type="NCBI Taxonomy" id="1828523"/>
    <lineage>
        <taxon>Eukaryota</taxon>
        <taxon>Fungi</taxon>
        <taxon>Dikarya</taxon>
        <taxon>Ascomycota</taxon>
        <taxon>Pezizomycotina</taxon>
        <taxon>Dothideomycetes</taxon>
        <taxon>Pleosporomycetidae</taxon>
        <taxon>Pleosporales</taxon>
        <taxon>Pleosporineae</taxon>
        <taxon>Didymellaceae</taxon>
        <taxon>Phoma</taxon>
    </lineage>
</organism>
<name>MFL2_PHOSM</name>
<feature type="chain" id="PRO_0000447828" description="MFS transporter L2">
    <location>
        <begin position="1"/>
        <end position="598"/>
    </location>
</feature>
<feature type="transmembrane region" description="Helical" evidence="1">
    <location>
        <begin position="83"/>
        <end position="103"/>
    </location>
</feature>
<feature type="transmembrane region" description="Helical" evidence="1">
    <location>
        <begin position="122"/>
        <end position="142"/>
    </location>
</feature>
<feature type="transmembrane region" description="Helical" evidence="1">
    <location>
        <begin position="150"/>
        <end position="170"/>
    </location>
</feature>
<feature type="transmembrane region" description="Helical" evidence="1">
    <location>
        <begin position="183"/>
        <end position="203"/>
    </location>
</feature>
<feature type="transmembrane region" description="Helical" evidence="1">
    <location>
        <begin position="212"/>
        <end position="232"/>
    </location>
</feature>
<feature type="transmembrane region" description="Helical" evidence="1">
    <location>
        <begin position="239"/>
        <end position="259"/>
    </location>
</feature>
<feature type="transmembrane region" description="Helical" evidence="1">
    <location>
        <begin position="277"/>
        <end position="297"/>
    </location>
</feature>
<feature type="transmembrane region" description="Helical" evidence="1">
    <location>
        <begin position="309"/>
        <end position="329"/>
    </location>
</feature>
<feature type="transmembrane region" description="Helical" evidence="1">
    <location>
        <begin position="346"/>
        <end position="366"/>
    </location>
</feature>
<feature type="transmembrane region" description="Helical" evidence="1">
    <location>
        <begin position="383"/>
        <end position="403"/>
    </location>
</feature>
<feature type="transmembrane region" description="Helical" evidence="1">
    <location>
        <begin position="411"/>
        <end position="431"/>
    </location>
</feature>
<feature type="transmembrane region" description="Helical" evidence="1">
    <location>
        <begin position="439"/>
        <end position="459"/>
    </location>
</feature>
<feature type="transmembrane region" description="Helical" evidence="1">
    <location>
        <begin position="476"/>
        <end position="496"/>
    </location>
</feature>
<feature type="transmembrane region" description="Helical" evidence="1">
    <location>
        <begin position="550"/>
        <end position="570"/>
    </location>
</feature>
<feature type="glycosylation site" description="N-linked (GlcNAc...) asparagine" evidence="2">
    <location>
        <position position="171"/>
    </location>
</feature>
<feature type="glycosylation site" description="N-linked (GlcNAc...) asparagine" evidence="2">
    <location>
        <position position="342"/>
    </location>
</feature>
<keyword id="KW-0325">Glycoprotein</keyword>
<keyword id="KW-0472">Membrane</keyword>
<keyword id="KW-0812">Transmembrane</keyword>
<keyword id="KW-1133">Transmembrane helix</keyword>
<keyword id="KW-0813">Transport</keyword>
<sequence>MEHNTDISTTQYNSHTVSTTTLSSFLVNVVTSSKRGNKMTTITAQPPRDEVEPAVPAPQLLSSDSASELSPKAEKFQPGWRFIAAFLSLCIIVLMAALDATSISVALPSMARALGGSAIEAFWAGTSFLLTSTIFQPVLGSFSHIFGRKSLIYISLVFFLAGSIIPAVANNFTTILVGRSIQGVGGGGIIALTEMVVVDTVPLRERGKWFSFFGMMWSFGTVAGPLIGGAFAQKVSWRWVFWINLPFLGIGTVLITVFLKLNQRHGEFLARLREVDWIGMVLFLGSTTGFLIPITWGGVQYPWDSWRTLVPLIVSAAGIVAFIVHQEKFAPHPLIRTSVFKNKSAALLYLTTVIHGIILWAILYFMPLYFEAVKGMGPIMAGVALFPWTFTVAPGAVATGIAIAVTGKYRWANWAGWFLATLGSGLLILLKPDTSTPAWIFLNLVGGIGTGILFPAMALAVQASASVKDQAYAANMFSFFRAFGQTLGVAIGGVVFQNQMKAKLLTYPLLADMADTYSKDAAGLVEIIKGMPAGLMKDQLKESYTDALKYIWIVATVLAGVSLVATLFIDEFDMDIEMDTERGFKEKSKVKDAEKETH</sequence>
<gene>
    <name evidence="4" type="primary">L2</name>
</gene>
<accession>A0A3G1DJE2</accession>
<evidence type="ECO:0000255" key="1"/>
<evidence type="ECO:0000255" key="2">
    <source>
        <dbReference type="PROSITE-ProRule" id="PRU00498"/>
    </source>
</evidence>
<evidence type="ECO:0000269" key="3">
    <source>
    </source>
</evidence>
<evidence type="ECO:0000303" key="4">
    <source>
    </source>
</evidence>
<evidence type="ECO:0000305" key="5"/>